<keyword id="KW-0963">Cytoplasm</keyword>
<keyword id="KW-0671">Queuosine biosynthesis</keyword>
<keyword id="KW-1185">Reference proteome</keyword>
<keyword id="KW-0949">S-adenosyl-L-methionine</keyword>
<keyword id="KW-0808">Transferase</keyword>
<proteinExistence type="inferred from homology"/>
<reference key="1">
    <citation type="journal article" date="2005" name="J. Bacteriol.">
        <title>Insights on evolution of virulence and resistance from the complete genome analysis of an early methicillin-resistant Staphylococcus aureus strain and a biofilm-producing methicillin-resistant Staphylococcus epidermidis strain.</title>
        <authorList>
            <person name="Gill S.R."/>
            <person name="Fouts D.E."/>
            <person name="Archer G.L."/>
            <person name="Mongodin E.F."/>
            <person name="DeBoy R.T."/>
            <person name="Ravel J."/>
            <person name="Paulsen I.T."/>
            <person name="Kolonay J.F."/>
            <person name="Brinkac L.M."/>
            <person name="Beanan M.J."/>
            <person name="Dodson R.J."/>
            <person name="Daugherty S.C."/>
            <person name="Madupu R."/>
            <person name="Angiuoli S.V."/>
            <person name="Durkin A.S."/>
            <person name="Haft D.H."/>
            <person name="Vamathevan J.J."/>
            <person name="Khouri H."/>
            <person name="Utterback T.R."/>
            <person name="Lee C."/>
            <person name="Dimitrov G."/>
            <person name="Jiang L."/>
            <person name="Qin H."/>
            <person name="Weidman J."/>
            <person name="Tran K."/>
            <person name="Kang K.H."/>
            <person name="Hance I.R."/>
            <person name="Nelson K.E."/>
            <person name="Fraser C.M."/>
        </authorList>
    </citation>
    <scope>NUCLEOTIDE SEQUENCE [LARGE SCALE GENOMIC DNA]</scope>
    <source>
        <strain>ATCC 35984 / DSM 28319 / BCRC 17069 / CCUG 31568 / BM 3577 / RP62A</strain>
    </source>
</reference>
<accession>Q5HNR1</accession>
<protein>
    <recommendedName>
        <fullName evidence="1">S-adenosylmethionine:tRNA ribosyltransferase-isomerase</fullName>
        <ecNumber evidence="1">2.4.99.17</ecNumber>
    </recommendedName>
    <alternativeName>
        <fullName evidence="1">Queuosine biosynthesis protein QueA</fullName>
    </alternativeName>
</protein>
<evidence type="ECO:0000255" key="1">
    <source>
        <dbReference type="HAMAP-Rule" id="MF_00113"/>
    </source>
</evidence>
<name>QUEA_STAEQ</name>
<dbReference type="EC" id="2.4.99.17" evidence="1"/>
<dbReference type="EMBL" id="CP000029">
    <property type="protein sequence ID" value="AAW54589.1"/>
    <property type="molecule type" value="Genomic_DNA"/>
</dbReference>
<dbReference type="RefSeq" id="WP_010959189.1">
    <property type="nucleotide sequence ID" value="NC_002976.3"/>
</dbReference>
<dbReference type="SMR" id="Q5HNR1"/>
<dbReference type="STRING" id="176279.SERP1204"/>
<dbReference type="KEGG" id="ser:SERP1204"/>
<dbReference type="eggNOG" id="COG0809">
    <property type="taxonomic scope" value="Bacteria"/>
</dbReference>
<dbReference type="HOGENOM" id="CLU_039110_1_0_9"/>
<dbReference type="UniPathway" id="UPA00392"/>
<dbReference type="Proteomes" id="UP000000531">
    <property type="component" value="Chromosome"/>
</dbReference>
<dbReference type="GO" id="GO:0005737">
    <property type="term" value="C:cytoplasm"/>
    <property type="evidence" value="ECO:0007669"/>
    <property type="project" value="UniProtKB-SubCell"/>
</dbReference>
<dbReference type="GO" id="GO:0051075">
    <property type="term" value="F:S-adenosylmethionine:tRNA ribosyltransferase-isomerase activity"/>
    <property type="evidence" value="ECO:0007669"/>
    <property type="project" value="UniProtKB-EC"/>
</dbReference>
<dbReference type="GO" id="GO:0008616">
    <property type="term" value="P:queuosine biosynthetic process"/>
    <property type="evidence" value="ECO:0007669"/>
    <property type="project" value="UniProtKB-UniRule"/>
</dbReference>
<dbReference type="GO" id="GO:0002099">
    <property type="term" value="P:tRNA wobble guanine modification"/>
    <property type="evidence" value="ECO:0007669"/>
    <property type="project" value="TreeGrafter"/>
</dbReference>
<dbReference type="FunFam" id="2.40.10.240:FF:000002">
    <property type="entry name" value="S-adenosylmethionine:tRNA ribosyltransferase-isomerase"/>
    <property type="match status" value="1"/>
</dbReference>
<dbReference type="FunFam" id="3.40.1780.10:FF:000001">
    <property type="entry name" value="S-adenosylmethionine:tRNA ribosyltransferase-isomerase"/>
    <property type="match status" value="1"/>
</dbReference>
<dbReference type="Gene3D" id="2.40.10.240">
    <property type="entry name" value="QueA-like"/>
    <property type="match status" value="1"/>
</dbReference>
<dbReference type="Gene3D" id="3.40.1780.10">
    <property type="entry name" value="QueA-like"/>
    <property type="match status" value="1"/>
</dbReference>
<dbReference type="HAMAP" id="MF_00113">
    <property type="entry name" value="QueA"/>
    <property type="match status" value="1"/>
</dbReference>
<dbReference type="InterPro" id="IPR003699">
    <property type="entry name" value="QueA"/>
</dbReference>
<dbReference type="InterPro" id="IPR042118">
    <property type="entry name" value="QueA_dom1"/>
</dbReference>
<dbReference type="InterPro" id="IPR042119">
    <property type="entry name" value="QueA_dom2"/>
</dbReference>
<dbReference type="InterPro" id="IPR036100">
    <property type="entry name" value="QueA_sf"/>
</dbReference>
<dbReference type="NCBIfam" id="NF001140">
    <property type="entry name" value="PRK00147.1"/>
    <property type="match status" value="1"/>
</dbReference>
<dbReference type="NCBIfam" id="TIGR00113">
    <property type="entry name" value="queA"/>
    <property type="match status" value="1"/>
</dbReference>
<dbReference type="PANTHER" id="PTHR30307">
    <property type="entry name" value="S-ADENOSYLMETHIONINE:TRNA RIBOSYLTRANSFERASE-ISOMERASE"/>
    <property type="match status" value="1"/>
</dbReference>
<dbReference type="PANTHER" id="PTHR30307:SF0">
    <property type="entry name" value="S-ADENOSYLMETHIONINE:TRNA RIBOSYLTRANSFERASE-ISOMERASE"/>
    <property type="match status" value="1"/>
</dbReference>
<dbReference type="Pfam" id="PF02547">
    <property type="entry name" value="Queuosine_synth"/>
    <property type="match status" value="1"/>
</dbReference>
<dbReference type="SUPFAM" id="SSF111337">
    <property type="entry name" value="QueA-like"/>
    <property type="match status" value="1"/>
</dbReference>
<feature type="chain" id="PRO_0000165445" description="S-adenosylmethionine:tRNA ribosyltransferase-isomerase">
    <location>
        <begin position="1"/>
        <end position="341"/>
    </location>
</feature>
<organism>
    <name type="scientific">Staphylococcus epidermidis (strain ATCC 35984 / DSM 28319 / BCRC 17069 / CCUG 31568 / BM 3577 / RP62A)</name>
    <dbReference type="NCBI Taxonomy" id="176279"/>
    <lineage>
        <taxon>Bacteria</taxon>
        <taxon>Bacillati</taxon>
        <taxon>Bacillota</taxon>
        <taxon>Bacilli</taxon>
        <taxon>Bacillales</taxon>
        <taxon>Staphylococcaceae</taxon>
        <taxon>Staphylococcus</taxon>
    </lineage>
</organism>
<sequence length="341" mass="38989">MNIEDFDYHLPESLIAQTPLKNRDQSRLLVLSKDTGELTHLHFRDVIHYFEPGDTLVLNDTRVMPARLFGLKEETGAKVEMLMLTQIEGNDWEVLLKPAKRIKKGHRLNFGDGKIVAECIEELEQGGRIMRLHYEGILQERLDELGDMPLPPYIKERLDDPDRYQTVYAKESGSAAAPTAGLHFTDDLLNKIKQKGVHIAFITLHVGLGTFRPVSVENIDDHEMHSEYYQMTQETADLLNKTKESGKRVISVGTTSTRTLETIRRDHPQFVATSGWTDIFIYPGFEFKAIDGLITNFHLPKSTLVMLVSAFSNKKYILNAYHKAVEMEYRFFSFGDAMLII</sequence>
<comment type="function">
    <text evidence="1">Transfers and isomerizes the ribose moiety from AdoMet to the 7-aminomethyl group of 7-deazaguanine (preQ1-tRNA) to give epoxyqueuosine (oQ-tRNA).</text>
</comment>
<comment type="catalytic activity">
    <reaction evidence="1">
        <text>7-aminomethyl-7-carbaguanosine(34) in tRNA + S-adenosyl-L-methionine = epoxyqueuosine(34) in tRNA + adenine + L-methionine + 2 H(+)</text>
        <dbReference type="Rhea" id="RHEA:32155"/>
        <dbReference type="Rhea" id="RHEA-COMP:10342"/>
        <dbReference type="Rhea" id="RHEA-COMP:18582"/>
        <dbReference type="ChEBI" id="CHEBI:15378"/>
        <dbReference type="ChEBI" id="CHEBI:16708"/>
        <dbReference type="ChEBI" id="CHEBI:57844"/>
        <dbReference type="ChEBI" id="CHEBI:59789"/>
        <dbReference type="ChEBI" id="CHEBI:82833"/>
        <dbReference type="ChEBI" id="CHEBI:194443"/>
        <dbReference type="EC" id="2.4.99.17"/>
    </reaction>
</comment>
<comment type="pathway">
    <text evidence="1">tRNA modification; tRNA-queuosine biosynthesis.</text>
</comment>
<comment type="subunit">
    <text evidence="1">Monomer.</text>
</comment>
<comment type="subcellular location">
    <subcellularLocation>
        <location evidence="1">Cytoplasm</location>
    </subcellularLocation>
</comment>
<comment type="similarity">
    <text evidence="1">Belongs to the QueA family.</text>
</comment>
<gene>
    <name evidence="1" type="primary">queA</name>
    <name type="ordered locus">SERP1204</name>
</gene>